<proteinExistence type="inferred from homology"/>
<comment type="function">
    <text evidence="2">Cell wall formation.</text>
</comment>
<comment type="catalytic activity">
    <reaction evidence="2">
        <text>2 D-alanine + ATP = D-alanyl-D-alanine + ADP + phosphate + H(+)</text>
        <dbReference type="Rhea" id="RHEA:11224"/>
        <dbReference type="ChEBI" id="CHEBI:15378"/>
        <dbReference type="ChEBI" id="CHEBI:30616"/>
        <dbReference type="ChEBI" id="CHEBI:43474"/>
        <dbReference type="ChEBI" id="CHEBI:57416"/>
        <dbReference type="ChEBI" id="CHEBI:57822"/>
        <dbReference type="ChEBI" id="CHEBI:456216"/>
        <dbReference type="EC" id="6.3.2.4"/>
    </reaction>
</comment>
<comment type="cofactor">
    <cofactor evidence="1">
        <name>Mg(2+)</name>
        <dbReference type="ChEBI" id="CHEBI:18420"/>
    </cofactor>
    <cofactor evidence="1">
        <name>Mn(2+)</name>
        <dbReference type="ChEBI" id="CHEBI:29035"/>
    </cofactor>
    <text evidence="1">Binds 2 magnesium or manganese ions per subunit.</text>
</comment>
<comment type="pathway">
    <text evidence="2">Cell wall biogenesis; peptidoglycan biosynthesis.</text>
</comment>
<comment type="subcellular location">
    <subcellularLocation>
        <location evidence="2">Cytoplasm</location>
    </subcellularLocation>
</comment>
<comment type="similarity">
    <text evidence="2">Belongs to the D-alanine--D-alanine ligase family.</text>
</comment>
<keyword id="KW-0067">ATP-binding</keyword>
<keyword id="KW-0133">Cell shape</keyword>
<keyword id="KW-0961">Cell wall biogenesis/degradation</keyword>
<keyword id="KW-0963">Cytoplasm</keyword>
<keyword id="KW-0436">Ligase</keyword>
<keyword id="KW-0460">Magnesium</keyword>
<keyword id="KW-0464">Manganese</keyword>
<keyword id="KW-0479">Metal-binding</keyword>
<keyword id="KW-0547">Nucleotide-binding</keyword>
<keyword id="KW-0573">Peptidoglycan synthesis</keyword>
<keyword id="KW-1185">Reference proteome</keyword>
<name>DDL_NOVAD</name>
<protein>
    <recommendedName>
        <fullName evidence="2">D-alanine--D-alanine ligase</fullName>
        <ecNumber evidence="2">6.3.2.4</ecNumber>
    </recommendedName>
    <alternativeName>
        <fullName evidence="2">D-Ala-D-Ala ligase</fullName>
    </alternativeName>
    <alternativeName>
        <fullName evidence="2">D-alanylalanine synthetase</fullName>
    </alternativeName>
</protein>
<dbReference type="EC" id="6.3.2.4" evidence="2"/>
<dbReference type="EMBL" id="CP000248">
    <property type="protein sequence ID" value="ABD25581.1"/>
    <property type="molecule type" value="Genomic_DNA"/>
</dbReference>
<dbReference type="RefSeq" id="WP_011444795.1">
    <property type="nucleotide sequence ID" value="NC_007794.1"/>
</dbReference>
<dbReference type="SMR" id="Q2G992"/>
<dbReference type="STRING" id="279238.Saro_1136"/>
<dbReference type="KEGG" id="nar:Saro_1136"/>
<dbReference type="eggNOG" id="COG1181">
    <property type="taxonomic scope" value="Bacteria"/>
</dbReference>
<dbReference type="HOGENOM" id="CLU_039268_1_1_5"/>
<dbReference type="UniPathway" id="UPA00219"/>
<dbReference type="Proteomes" id="UP000009134">
    <property type="component" value="Chromosome"/>
</dbReference>
<dbReference type="GO" id="GO:0005737">
    <property type="term" value="C:cytoplasm"/>
    <property type="evidence" value="ECO:0007669"/>
    <property type="project" value="UniProtKB-SubCell"/>
</dbReference>
<dbReference type="GO" id="GO:0005524">
    <property type="term" value="F:ATP binding"/>
    <property type="evidence" value="ECO:0007669"/>
    <property type="project" value="UniProtKB-KW"/>
</dbReference>
<dbReference type="GO" id="GO:0008716">
    <property type="term" value="F:D-alanine-D-alanine ligase activity"/>
    <property type="evidence" value="ECO:0007669"/>
    <property type="project" value="UniProtKB-UniRule"/>
</dbReference>
<dbReference type="GO" id="GO:0046872">
    <property type="term" value="F:metal ion binding"/>
    <property type="evidence" value="ECO:0007669"/>
    <property type="project" value="UniProtKB-KW"/>
</dbReference>
<dbReference type="GO" id="GO:0071555">
    <property type="term" value="P:cell wall organization"/>
    <property type="evidence" value="ECO:0007669"/>
    <property type="project" value="UniProtKB-KW"/>
</dbReference>
<dbReference type="GO" id="GO:0009252">
    <property type="term" value="P:peptidoglycan biosynthetic process"/>
    <property type="evidence" value="ECO:0007669"/>
    <property type="project" value="UniProtKB-UniRule"/>
</dbReference>
<dbReference type="GO" id="GO:0008360">
    <property type="term" value="P:regulation of cell shape"/>
    <property type="evidence" value="ECO:0007669"/>
    <property type="project" value="UniProtKB-KW"/>
</dbReference>
<dbReference type="Gene3D" id="3.40.50.20">
    <property type="match status" value="1"/>
</dbReference>
<dbReference type="Gene3D" id="3.30.1490.20">
    <property type="entry name" value="ATP-grasp fold, A domain"/>
    <property type="match status" value="1"/>
</dbReference>
<dbReference type="Gene3D" id="3.30.470.20">
    <property type="entry name" value="ATP-grasp fold, B domain"/>
    <property type="match status" value="1"/>
</dbReference>
<dbReference type="HAMAP" id="MF_00047">
    <property type="entry name" value="Dala_Dala_lig"/>
    <property type="match status" value="1"/>
</dbReference>
<dbReference type="InterPro" id="IPR011761">
    <property type="entry name" value="ATP-grasp"/>
</dbReference>
<dbReference type="InterPro" id="IPR013815">
    <property type="entry name" value="ATP_grasp_subdomain_1"/>
</dbReference>
<dbReference type="InterPro" id="IPR000291">
    <property type="entry name" value="D-Ala_lig_Van_CS"/>
</dbReference>
<dbReference type="InterPro" id="IPR005905">
    <property type="entry name" value="D_ala_D_ala"/>
</dbReference>
<dbReference type="InterPro" id="IPR011095">
    <property type="entry name" value="Dala_Dala_lig_C"/>
</dbReference>
<dbReference type="InterPro" id="IPR011127">
    <property type="entry name" value="Dala_Dala_lig_N"/>
</dbReference>
<dbReference type="InterPro" id="IPR016185">
    <property type="entry name" value="PreATP-grasp_dom_sf"/>
</dbReference>
<dbReference type="NCBIfam" id="TIGR01205">
    <property type="entry name" value="D_ala_D_alaTIGR"/>
    <property type="match status" value="1"/>
</dbReference>
<dbReference type="NCBIfam" id="NF002378">
    <property type="entry name" value="PRK01372.1"/>
    <property type="match status" value="1"/>
</dbReference>
<dbReference type="PANTHER" id="PTHR23132">
    <property type="entry name" value="D-ALANINE--D-ALANINE LIGASE"/>
    <property type="match status" value="1"/>
</dbReference>
<dbReference type="PANTHER" id="PTHR23132:SF23">
    <property type="entry name" value="D-ALANINE--D-ALANINE LIGASE B"/>
    <property type="match status" value="1"/>
</dbReference>
<dbReference type="Pfam" id="PF07478">
    <property type="entry name" value="Dala_Dala_lig_C"/>
    <property type="match status" value="1"/>
</dbReference>
<dbReference type="Pfam" id="PF01820">
    <property type="entry name" value="Dala_Dala_lig_N"/>
    <property type="match status" value="1"/>
</dbReference>
<dbReference type="PIRSF" id="PIRSF039102">
    <property type="entry name" value="Ddl/VanB"/>
    <property type="match status" value="1"/>
</dbReference>
<dbReference type="SUPFAM" id="SSF56059">
    <property type="entry name" value="Glutathione synthetase ATP-binding domain-like"/>
    <property type="match status" value="1"/>
</dbReference>
<dbReference type="SUPFAM" id="SSF52440">
    <property type="entry name" value="PreATP-grasp domain"/>
    <property type="match status" value="1"/>
</dbReference>
<dbReference type="PROSITE" id="PS50975">
    <property type="entry name" value="ATP_GRASP"/>
    <property type="match status" value="1"/>
</dbReference>
<dbReference type="PROSITE" id="PS00843">
    <property type="entry name" value="DALA_DALA_LIGASE_1"/>
    <property type="match status" value="1"/>
</dbReference>
<dbReference type="PROSITE" id="PS00844">
    <property type="entry name" value="DALA_DALA_LIGASE_2"/>
    <property type="match status" value="1"/>
</dbReference>
<feature type="chain" id="PRO_0000341141" description="D-alanine--D-alanine ligase">
    <location>
        <begin position="1"/>
        <end position="313"/>
    </location>
</feature>
<feature type="domain" description="ATP-grasp" evidence="2">
    <location>
        <begin position="104"/>
        <end position="304"/>
    </location>
</feature>
<feature type="binding site" evidence="2">
    <location>
        <begin position="130"/>
        <end position="187"/>
    </location>
    <ligand>
        <name>ATP</name>
        <dbReference type="ChEBI" id="CHEBI:30616"/>
    </ligand>
</feature>
<feature type="binding site" evidence="2">
    <location>
        <position position="255"/>
    </location>
    <ligand>
        <name>Mg(2+)</name>
        <dbReference type="ChEBI" id="CHEBI:18420"/>
        <label>1</label>
    </ligand>
</feature>
<feature type="binding site" evidence="2">
    <location>
        <position position="271"/>
    </location>
    <ligand>
        <name>Mg(2+)</name>
        <dbReference type="ChEBI" id="CHEBI:18420"/>
        <label>1</label>
    </ligand>
</feature>
<feature type="binding site" evidence="2">
    <location>
        <position position="271"/>
    </location>
    <ligand>
        <name>Mg(2+)</name>
        <dbReference type="ChEBI" id="CHEBI:18420"/>
        <label>2</label>
    </ligand>
</feature>
<feature type="binding site" evidence="2">
    <location>
        <position position="273"/>
    </location>
    <ligand>
        <name>Mg(2+)</name>
        <dbReference type="ChEBI" id="CHEBI:18420"/>
        <label>2</label>
    </ligand>
</feature>
<evidence type="ECO:0000250" key="1"/>
<evidence type="ECO:0000255" key="2">
    <source>
        <dbReference type="HAMAP-Rule" id="MF_00047"/>
    </source>
</evidence>
<sequence>MSLPKLHVAVLMGGWSSERPVSLMSGEGVAKALESKGHQVTRIDMDRDVALRLAEAKPDVVFNALHGTPGEDGSIQGLMDIMGLTYTHSGLVTSVIAIDKELTKQALVPHGIPMPGGRMVKTADLYKADPLPRPYVLKPVNEGSSVGVAIVTAEGNYGSPISAASKGPWQEFDQLLAEPFIRGRELTTAVIGDRALLVTELRPKSGFYDFDAKYTEGMTDHICPAEIPDEITEACKDIALRAHRLLGCKGTSRSDFRWDDEQGVEGLFLLEVNTQPGMTPLSLVPEQARALGMDYSDLVEAIIAEALKDAGKA</sequence>
<organism>
    <name type="scientific">Novosphingobium aromaticivorans (strain ATCC 700278 / DSM 12444 / CCUG 56034 / CIP 105152 / NBRC 16084 / F199)</name>
    <dbReference type="NCBI Taxonomy" id="279238"/>
    <lineage>
        <taxon>Bacteria</taxon>
        <taxon>Pseudomonadati</taxon>
        <taxon>Pseudomonadota</taxon>
        <taxon>Alphaproteobacteria</taxon>
        <taxon>Sphingomonadales</taxon>
        <taxon>Sphingomonadaceae</taxon>
        <taxon>Novosphingobium</taxon>
    </lineage>
</organism>
<accession>Q2G992</accession>
<reference key="1">
    <citation type="submission" date="2006-01" db="EMBL/GenBank/DDBJ databases">
        <title>Complete sequence of Novosphingobium aromaticivorans DSM 12444.</title>
        <authorList>
            <consortium name="US DOE Joint Genome Institute"/>
            <person name="Copeland A."/>
            <person name="Lucas S."/>
            <person name="Lapidus A."/>
            <person name="Barry K."/>
            <person name="Detter J.C."/>
            <person name="Glavina T."/>
            <person name="Hammon N."/>
            <person name="Israni S."/>
            <person name="Pitluck S."/>
            <person name="Chain P."/>
            <person name="Malfatti S."/>
            <person name="Shin M."/>
            <person name="Vergez L."/>
            <person name="Schmutz J."/>
            <person name="Larimer F."/>
            <person name="Land M."/>
            <person name="Kyrpides N."/>
            <person name="Ivanova N."/>
            <person name="Fredrickson J."/>
            <person name="Balkwill D."/>
            <person name="Romine M.F."/>
            <person name="Richardson P."/>
        </authorList>
    </citation>
    <scope>NUCLEOTIDE SEQUENCE [LARGE SCALE GENOMIC DNA]</scope>
    <source>
        <strain>ATCC 700278 / DSM 12444 / CCUG 56034 / CIP 105152 / NBRC 16084 / F199</strain>
    </source>
</reference>
<gene>
    <name evidence="2" type="primary">ddl</name>
    <name type="ordered locus">Saro_1136</name>
</gene>